<organism>
    <name type="scientific">Burkholderia ambifaria (strain ATCC BAA-244 / DSM 16087 / CCUG 44356 / LMG 19182 / AMMD)</name>
    <name type="common">Burkholderia cepacia (strain AMMD)</name>
    <dbReference type="NCBI Taxonomy" id="339670"/>
    <lineage>
        <taxon>Bacteria</taxon>
        <taxon>Pseudomonadati</taxon>
        <taxon>Pseudomonadota</taxon>
        <taxon>Betaproteobacteria</taxon>
        <taxon>Burkholderiales</taxon>
        <taxon>Burkholderiaceae</taxon>
        <taxon>Burkholderia</taxon>
        <taxon>Burkholderia cepacia complex</taxon>
    </lineage>
</organism>
<keyword id="KW-0223">Dioxygenase</keyword>
<keyword id="KW-0408">Iron</keyword>
<keyword id="KW-0479">Metal-binding</keyword>
<keyword id="KW-0560">Oxidoreductase</keyword>
<keyword id="KW-0847">Vitamin C</keyword>
<gene>
    <name type="ordered locus">Bamb_4192</name>
</gene>
<evidence type="ECO:0000255" key="1">
    <source>
        <dbReference type="HAMAP-Rule" id="MF_00657"/>
    </source>
</evidence>
<comment type="cofactor">
    <cofactor evidence="1">
        <name>Fe(2+)</name>
        <dbReference type="ChEBI" id="CHEBI:29033"/>
    </cofactor>
    <text evidence="1">Binds 1 Fe(2+) ion per subunit.</text>
</comment>
<comment type="cofactor">
    <cofactor evidence="1">
        <name>L-ascorbate</name>
        <dbReference type="ChEBI" id="CHEBI:38290"/>
    </cofactor>
</comment>
<proteinExistence type="inferred from homology"/>
<protein>
    <recommendedName>
        <fullName evidence="1">PKHD-type hydroxylase Bamb_4192</fullName>
        <ecNumber evidence="1">1.14.11.-</ecNumber>
    </recommendedName>
</protein>
<dbReference type="EC" id="1.14.11.-" evidence="1"/>
<dbReference type="EMBL" id="CP000441">
    <property type="protein sequence ID" value="ABI89745.1"/>
    <property type="molecule type" value="Genomic_DNA"/>
</dbReference>
<dbReference type="RefSeq" id="WP_011659183.1">
    <property type="nucleotide sequence ID" value="NC_008391.1"/>
</dbReference>
<dbReference type="SMR" id="Q0B7X8"/>
<dbReference type="GeneID" id="93087161"/>
<dbReference type="KEGG" id="bam:Bamb_4192"/>
<dbReference type="PATRIC" id="fig|339670.21.peg.4488"/>
<dbReference type="eggNOG" id="COG3128">
    <property type="taxonomic scope" value="Bacteria"/>
</dbReference>
<dbReference type="Proteomes" id="UP000000662">
    <property type="component" value="Chromosome 2"/>
</dbReference>
<dbReference type="GO" id="GO:0016706">
    <property type="term" value="F:2-oxoglutarate-dependent dioxygenase activity"/>
    <property type="evidence" value="ECO:0007669"/>
    <property type="project" value="UniProtKB-UniRule"/>
</dbReference>
<dbReference type="GO" id="GO:0005506">
    <property type="term" value="F:iron ion binding"/>
    <property type="evidence" value="ECO:0007669"/>
    <property type="project" value="UniProtKB-UniRule"/>
</dbReference>
<dbReference type="GO" id="GO:0031418">
    <property type="term" value="F:L-ascorbic acid binding"/>
    <property type="evidence" value="ECO:0007669"/>
    <property type="project" value="UniProtKB-KW"/>
</dbReference>
<dbReference type="GO" id="GO:0006974">
    <property type="term" value="P:DNA damage response"/>
    <property type="evidence" value="ECO:0007669"/>
    <property type="project" value="TreeGrafter"/>
</dbReference>
<dbReference type="GO" id="GO:0006879">
    <property type="term" value="P:intracellular iron ion homeostasis"/>
    <property type="evidence" value="ECO:0007669"/>
    <property type="project" value="TreeGrafter"/>
</dbReference>
<dbReference type="Gene3D" id="2.60.120.620">
    <property type="entry name" value="q2cbj1_9rhob like domain"/>
    <property type="match status" value="1"/>
</dbReference>
<dbReference type="Gene3D" id="4.10.860.20">
    <property type="entry name" value="Rabenosyn, Rab binding domain"/>
    <property type="match status" value="1"/>
</dbReference>
<dbReference type="HAMAP" id="MF_00657">
    <property type="entry name" value="Hydroxyl_YbiX"/>
    <property type="match status" value="1"/>
</dbReference>
<dbReference type="InterPro" id="IPR005123">
    <property type="entry name" value="Oxoglu/Fe-dep_dioxygenase_dom"/>
</dbReference>
<dbReference type="InterPro" id="IPR041097">
    <property type="entry name" value="PKHD_C"/>
</dbReference>
<dbReference type="InterPro" id="IPR023550">
    <property type="entry name" value="PKHD_hydroxylase"/>
</dbReference>
<dbReference type="InterPro" id="IPR006620">
    <property type="entry name" value="Pro_4_hyd_alph"/>
</dbReference>
<dbReference type="InterPro" id="IPR044862">
    <property type="entry name" value="Pro_4_hyd_alph_FE2OG_OXY"/>
</dbReference>
<dbReference type="NCBIfam" id="NF003973">
    <property type="entry name" value="PRK05467.1-2"/>
    <property type="match status" value="1"/>
</dbReference>
<dbReference type="NCBIfam" id="NF003974">
    <property type="entry name" value="PRK05467.1-3"/>
    <property type="match status" value="1"/>
</dbReference>
<dbReference type="NCBIfam" id="NF003975">
    <property type="entry name" value="PRK05467.1-4"/>
    <property type="match status" value="1"/>
</dbReference>
<dbReference type="PANTHER" id="PTHR41536">
    <property type="entry name" value="PKHD-TYPE HYDROXYLASE YBIX"/>
    <property type="match status" value="1"/>
</dbReference>
<dbReference type="PANTHER" id="PTHR41536:SF1">
    <property type="entry name" value="PKHD-TYPE HYDROXYLASE YBIX"/>
    <property type="match status" value="1"/>
</dbReference>
<dbReference type="Pfam" id="PF13640">
    <property type="entry name" value="2OG-FeII_Oxy_3"/>
    <property type="match status" value="1"/>
</dbReference>
<dbReference type="Pfam" id="PF18331">
    <property type="entry name" value="PKHD_C"/>
    <property type="match status" value="1"/>
</dbReference>
<dbReference type="SMART" id="SM00702">
    <property type="entry name" value="P4Hc"/>
    <property type="match status" value="1"/>
</dbReference>
<dbReference type="SUPFAM" id="SSF51197">
    <property type="entry name" value="Clavaminate synthase-like"/>
    <property type="match status" value="1"/>
</dbReference>
<dbReference type="PROSITE" id="PS51471">
    <property type="entry name" value="FE2OG_OXY"/>
    <property type="match status" value="1"/>
</dbReference>
<accession>Q0B7X8</accession>
<sequence>MMLHIPGVLTNAQVAQCRELLDAAHWVDGNATSGAQSALAKRNRQLPEGSPVARAVGDAIQDALARHALFFSAALPLKVFPPLFNRYAGGETFGTHVDNAIRLLRGTDFRVRSDLSATLFLEEPDAYDGGELCVEDTYGVHRAKLPAGDLVLYPASSLHHVTPVTRGERVASFFWIQSMVRDDGDRTLLFQLDTQIQALSAEKGAKDPMVISLTGIYHNLLRKWADA</sequence>
<name>Y4192_BURCM</name>
<feature type="chain" id="PRO_0000346467" description="PKHD-type hydroxylase Bamb_4192">
    <location>
        <begin position="1"/>
        <end position="227"/>
    </location>
</feature>
<feature type="domain" description="Fe2OG dioxygenase" evidence="1">
    <location>
        <begin position="78"/>
        <end position="178"/>
    </location>
</feature>
<feature type="binding site" evidence="1">
    <location>
        <position position="96"/>
    </location>
    <ligand>
        <name>Fe cation</name>
        <dbReference type="ChEBI" id="CHEBI:24875"/>
    </ligand>
</feature>
<feature type="binding site" evidence="1">
    <location>
        <position position="98"/>
    </location>
    <ligand>
        <name>Fe cation</name>
        <dbReference type="ChEBI" id="CHEBI:24875"/>
    </ligand>
</feature>
<feature type="binding site" evidence="1">
    <location>
        <position position="159"/>
    </location>
    <ligand>
        <name>Fe cation</name>
        <dbReference type="ChEBI" id="CHEBI:24875"/>
    </ligand>
</feature>
<feature type="binding site" evidence="1">
    <location>
        <position position="169"/>
    </location>
    <ligand>
        <name>2-oxoglutarate</name>
        <dbReference type="ChEBI" id="CHEBI:16810"/>
    </ligand>
</feature>
<reference key="1">
    <citation type="submission" date="2006-08" db="EMBL/GenBank/DDBJ databases">
        <title>Complete sequence of chromosome 2 of Burkholderia cepacia AMMD.</title>
        <authorList>
            <person name="Copeland A."/>
            <person name="Lucas S."/>
            <person name="Lapidus A."/>
            <person name="Barry K."/>
            <person name="Detter J.C."/>
            <person name="Glavina del Rio T."/>
            <person name="Hammon N."/>
            <person name="Israni S."/>
            <person name="Pitluck S."/>
            <person name="Bruce D."/>
            <person name="Chain P."/>
            <person name="Malfatti S."/>
            <person name="Shin M."/>
            <person name="Vergez L."/>
            <person name="Schmutz J."/>
            <person name="Larimer F."/>
            <person name="Land M."/>
            <person name="Hauser L."/>
            <person name="Kyrpides N."/>
            <person name="Kim E."/>
            <person name="Parke J."/>
            <person name="Coenye T."/>
            <person name="Konstantinidis K."/>
            <person name="Ramette A."/>
            <person name="Tiedje J."/>
            <person name="Richardson P."/>
        </authorList>
    </citation>
    <scope>NUCLEOTIDE SEQUENCE [LARGE SCALE GENOMIC DNA]</scope>
    <source>
        <strain>ATCC BAA-244 / DSM 16087 / CCUG 44356 / LMG 19182 / AMMD</strain>
    </source>
</reference>